<gene>
    <name type="ORF">DDB_G0287265</name>
</gene>
<reference key="1">
    <citation type="journal article" date="2005" name="Nature">
        <title>The genome of the social amoeba Dictyostelium discoideum.</title>
        <authorList>
            <person name="Eichinger L."/>
            <person name="Pachebat J.A."/>
            <person name="Gloeckner G."/>
            <person name="Rajandream M.A."/>
            <person name="Sucgang R."/>
            <person name="Berriman M."/>
            <person name="Song J."/>
            <person name="Olsen R."/>
            <person name="Szafranski K."/>
            <person name="Xu Q."/>
            <person name="Tunggal B."/>
            <person name="Kummerfeld S."/>
            <person name="Madera M."/>
            <person name="Konfortov B.A."/>
            <person name="Rivero F."/>
            <person name="Bankier A.T."/>
            <person name="Lehmann R."/>
            <person name="Hamlin N."/>
            <person name="Davies R."/>
            <person name="Gaudet P."/>
            <person name="Fey P."/>
            <person name="Pilcher K."/>
            <person name="Chen G."/>
            <person name="Saunders D."/>
            <person name="Sodergren E.J."/>
            <person name="Davis P."/>
            <person name="Kerhornou A."/>
            <person name="Nie X."/>
            <person name="Hall N."/>
            <person name="Anjard C."/>
            <person name="Hemphill L."/>
            <person name="Bason N."/>
            <person name="Farbrother P."/>
            <person name="Desany B."/>
            <person name="Just E."/>
            <person name="Morio T."/>
            <person name="Rost R."/>
            <person name="Churcher C.M."/>
            <person name="Cooper J."/>
            <person name="Haydock S."/>
            <person name="van Driessche N."/>
            <person name="Cronin A."/>
            <person name="Goodhead I."/>
            <person name="Muzny D.M."/>
            <person name="Mourier T."/>
            <person name="Pain A."/>
            <person name="Lu M."/>
            <person name="Harper D."/>
            <person name="Lindsay R."/>
            <person name="Hauser H."/>
            <person name="James K.D."/>
            <person name="Quiles M."/>
            <person name="Madan Babu M."/>
            <person name="Saito T."/>
            <person name="Buchrieser C."/>
            <person name="Wardroper A."/>
            <person name="Felder M."/>
            <person name="Thangavelu M."/>
            <person name="Johnson D."/>
            <person name="Knights A."/>
            <person name="Loulseged H."/>
            <person name="Mungall K.L."/>
            <person name="Oliver K."/>
            <person name="Price C."/>
            <person name="Quail M.A."/>
            <person name="Urushihara H."/>
            <person name="Hernandez J."/>
            <person name="Rabbinowitsch E."/>
            <person name="Steffen D."/>
            <person name="Sanders M."/>
            <person name="Ma J."/>
            <person name="Kohara Y."/>
            <person name="Sharp S."/>
            <person name="Simmonds M.N."/>
            <person name="Spiegler S."/>
            <person name="Tivey A."/>
            <person name="Sugano S."/>
            <person name="White B."/>
            <person name="Walker D."/>
            <person name="Woodward J.R."/>
            <person name="Winckler T."/>
            <person name="Tanaka Y."/>
            <person name="Shaulsky G."/>
            <person name="Schleicher M."/>
            <person name="Weinstock G.M."/>
            <person name="Rosenthal A."/>
            <person name="Cox E.C."/>
            <person name="Chisholm R.L."/>
            <person name="Gibbs R.A."/>
            <person name="Loomis W.F."/>
            <person name="Platzer M."/>
            <person name="Kay R.R."/>
            <person name="Williams J.G."/>
            <person name="Dear P.H."/>
            <person name="Noegel A.A."/>
            <person name="Barrell B.G."/>
            <person name="Kuspa A."/>
        </authorList>
    </citation>
    <scope>NUCLEOTIDE SEQUENCE [LARGE SCALE GENOMIC DNA]</scope>
    <source>
        <strain>AX4</strain>
    </source>
</reference>
<name>Y9210_DICDI</name>
<proteinExistence type="predicted"/>
<sequence length="489" mass="54881">MIEEHGGIVQSDGSIQPIDMSSFEKKSGSKKKEKKLTPKNINLLVQQSNQSVKQQKDAQKKQTSNGFNNNNSSNIHDGGMGGGSSSDNMDGSLDYSINNILKKEYEKINRNQVSSFSDVENFSEDDEDDDAEDDDSSDDQVNNKKNKPKKPSKLMKHDSVDGKNKMTPISSTSKKKVQHQLKEKNKKKGIKNDKKKSKPTKPTPKSVSSLPPPKIDSSTNNDNGSSDDDNSAKFKKYLFSIEPQKFEHTIEIPPFREINEFYDQDDGYSILSKNKYIGNWRDHNQYKSFDFDEEIDNQLDDNIINNDNDNDNDNDDDNDNDNDNDNDNDNDNDDDENGEDNGEDLNINNNNNNYNNNNNNNNNNNNNNNNNNNNNNNNNNNNNNFTSIQNDLDLQNNLNLSPIIITSSSSSSSSSPIGRNEIKTSLVSESGRSISSPILIPSPTLSSKSNNQENDDPTLVKSNNSFIKSIFSSGKIKRNSLQEYSIRNS</sequence>
<dbReference type="EMBL" id="AAFI02000099">
    <property type="protein sequence ID" value="EAL63834.1"/>
    <property type="molecule type" value="Genomic_DNA"/>
</dbReference>
<dbReference type="RefSeq" id="XP_637339.1">
    <property type="nucleotide sequence ID" value="XM_632247.1"/>
</dbReference>
<dbReference type="PaxDb" id="44689-DDB0219210"/>
<dbReference type="EnsemblProtists" id="EAL63834">
    <property type="protein sequence ID" value="EAL63834"/>
    <property type="gene ID" value="DDB_G0287265"/>
</dbReference>
<dbReference type="GeneID" id="8626037"/>
<dbReference type="KEGG" id="ddi:DDB_G0287265"/>
<dbReference type="dictyBase" id="DDB_G0287265"/>
<dbReference type="VEuPathDB" id="AmoebaDB:DDB_G0287265"/>
<dbReference type="eggNOG" id="ENOG502RIDR">
    <property type="taxonomic scope" value="Eukaryota"/>
</dbReference>
<dbReference type="HOGENOM" id="CLU_558283_0_0_1"/>
<dbReference type="InParanoid" id="Q54KL8"/>
<dbReference type="PRO" id="PR:Q54KL8"/>
<dbReference type="Proteomes" id="UP000002195">
    <property type="component" value="Chromosome 5"/>
</dbReference>
<accession>Q54KL8</accession>
<feature type="chain" id="PRO_0000347034" description="Putative uncharacterized protein DDB_G0287265">
    <location>
        <begin position="1"/>
        <end position="489"/>
    </location>
</feature>
<feature type="region of interest" description="Disordered" evidence="1">
    <location>
        <begin position="1"/>
        <end position="94"/>
    </location>
</feature>
<feature type="region of interest" description="Disordered" evidence="1">
    <location>
        <begin position="109"/>
        <end position="229"/>
    </location>
</feature>
<feature type="region of interest" description="Disordered" evidence="1">
    <location>
        <begin position="300"/>
        <end position="389"/>
    </location>
</feature>
<feature type="region of interest" description="Disordered" evidence="1">
    <location>
        <begin position="428"/>
        <end position="461"/>
    </location>
</feature>
<feature type="compositionally biased region" description="Low complexity" evidence="1">
    <location>
        <begin position="43"/>
        <end position="53"/>
    </location>
</feature>
<feature type="compositionally biased region" description="Low complexity" evidence="1">
    <location>
        <begin position="64"/>
        <end position="77"/>
    </location>
</feature>
<feature type="compositionally biased region" description="Acidic residues" evidence="1">
    <location>
        <begin position="121"/>
        <end position="138"/>
    </location>
</feature>
<feature type="compositionally biased region" description="Basic residues" evidence="1">
    <location>
        <begin position="144"/>
        <end position="154"/>
    </location>
</feature>
<feature type="compositionally biased region" description="Basic and acidic residues" evidence="1">
    <location>
        <begin position="155"/>
        <end position="164"/>
    </location>
</feature>
<feature type="compositionally biased region" description="Basic residues" evidence="1">
    <location>
        <begin position="173"/>
        <end position="199"/>
    </location>
</feature>
<feature type="compositionally biased region" description="Acidic residues" evidence="1">
    <location>
        <begin position="308"/>
        <end position="343"/>
    </location>
</feature>
<feature type="compositionally biased region" description="Low complexity" evidence="1">
    <location>
        <begin position="344"/>
        <end position="389"/>
    </location>
</feature>
<feature type="compositionally biased region" description="Low complexity" evidence="1">
    <location>
        <begin position="433"/>
        <end position="449"/>
    </location>
</feature>
<keyword id="KW-1185">Reference proteome</keyword>
<evidence type="ECO:0000256" key="1">
    <source>
        <dbReference type="SAM" id="MobiDB-lite"/>
    </source>
</evidence>
<protein>
    <recommendedName>
        <fullName>Putative uncharacterized protein DDB_G0287265</fullName>
    </recommendedName>
</protein>
<organism>
    <name type="scientific">Dictyostelium discoideum</name>
    <name type="common">Social amoeba</name>
    <dbReference type="NCBI Taxonomy" id="44689"/>
    <lineage>
        <taxon>Eukaryota</taxon>
        <taxon>Amoebozoa</taxon>
        <taxon>Evosea</taxon>
        <taxon>Eumycetozoa</taxon>
        <taxon>Dictyostelia</taxon>
        <taxon>Dictyosteliales</taxon>
        <taxon>Dictyosteliaceae</taxon>
        <taxon>Dictyostelium</taxon>
    </lineage>
</organism>